<reference key="1">
    <citation type="journal article" date="2000" name="J. Biol. Chem.">
        <title>Molecular characterization of the S-adenosyl-L-methionine: 3'-hydroxy-N-methylcoclaurine 4'O-methyltransferase involved in isoquinoline alkaloid biosynthesis in Coptis japonica.</title>
        <authorList>
            <person name="Morishige T."/>
            <person name="Tsujita T."/>
            <person name="Yamada Y."/>
            <person name="Sato F."/>
        </authorList>
    </citation>
    <scope>NUCLEOTIDE SEQUENCE [MRNA]</scope>
    <scope>CHARACTERIZATION</scope>
</reference>
<accession>Q9LEL5</accession>
<name>4OMT_COPJA</name>
<protein>
    <recommendedName>
        <fullName>3'-hydroxy-N-methyl-(S)-coclaurine 4'-O-methyltransferase</fullName>
        <ecNumber>2.1.1.116</ecNumber>
    </recommendedName>
    <alternativeName>
        <fullName>S-adenosyl-L-methionine:3'-hydroxy-N-methylcoclaurine 4'-O-methyltransferase</fullName>
        <shortName>4'-OMT</shortName>
    </alternativeName>
</protein>
<evidence type="ECO:0000255" key="1">
    <source>
        <dbReference type="PROSITE-ProRule" id="PRU01020"/>
    </source>
</evidence>
<proteinExistence type="evidence at protein level"/>
<comment type="function">
    <text>Catalyzes the transfer of the methyl group to the 4'-hydroxyl group of 3'-hydroxy-N-methylcoclaurine to form reticuline.</text>
</comment>
<comment type="catalytic activity">
    <reaction>
        <text>(S)-3'-hydroxy-N-methylcoclaurine + S-adenosyl-L-methionine = (S)-reticuline + S-adenosyl-L-homocysteine + H(+)</text>
        <dbReference type="Rhea" id="RHEA:17789"/>
        <dbReference type="ChEBI" id="CHEBI:15378"/>
        <dbReference type="ChEBI" id="CHEBI:57856"/>
        <dbReference type="ChEBI" id="CHEBI:57873"/>
        <dbReference type="ChEBI" id="CHEBI:58010"/>
        <dbReference type="ChEBI" id="CHEBI:59789"/>
        <dbReference type="EC" id="2.1.1.116"/>
    </reaction>
</comment>
<comment type="pathway">
    <text>Alkaloid biosynthesis; (S)-reticuline biosynthesis; (S)-reticuline from (S)-norcoclaurine: step 4/4.</text>
</comment>
<comment type="subunit">
    <text>Homodimer.</text>
</comment>
<comment type="similarity">
    <text evidence="1">Belongs to the class I-like SAM-binding methyltransferase superfamily. Cation-independent O-methyltransferase family. COMT subfamily.</text>
</comment>
<feature type="chain" id="PRO_0000204430" description="3'-hydroxy-N-methyl-(S)-coclaurine 4'-O-methyltransferase">
    <location>
        <begin position="1"/>
        <end position="350"/>
    </location>
</feature>
<feature type="active site" description="Proton acceptor" evidence="1">
    <location>
        <position position="257"/>
    </location>
</feature>
<feature type="binding site" evidence="1">
    <location>
        <position position="196"/>
    </location>
    <ligand>
        <name>S-adenosyl-L-methionine</name>
        <dbReference type="ChEBI" id="CHEBI:59789"/>
    </ligand>
</feature>
<feature type="binding site" evidence="1">
    <location>
        <position position="219"/>
    </location>
    <ligand>
        <name>S-adenosyl-L-methionine</name>
        <dbReference type="ChEBI" id="CHEBI:59789"/>
    </ligand>
</feature>
<feature type="binding site" evidence="1">
    <location>
        <position position="239"/>
    </location>
    <ligand>
        <name>S-adenosyl-L-methionine</name>
        <dbReference type="ChEBI" id="CHEBI:59789"/>
    </ligand>
</feature>
<feature type="binding site" evidence="1">
    <location>
        <position position="240"/>
    </location>
    <ligand>
        <name>S-adenosyl-L-methionine</name>
        <dbReference type="ChEBI" id="CHEBI:59789"/>
    </ligand>
</feature>
<feature type="binding site" evidence="1">
    <location>
        <position position="253"/>
    </location>
    <ligand>
        <name>S-adenosyl-L-methionine</name>
        <dbReference type="ChEBI" id="CHEBI:59789"/>
    </ligand>
</feature>
<sequence length="350" mass="38776">MAFHGKDDVLDIKAQAHVWKIIYGFADSLVLRCAVELGIVDIIDNNNQPMALADLASKLPVSDVNCDNLYRILRYLVKMEILRVEKSDDGQKKYALEPIATLLSRNAKRSMVPMILGMTQKDFMTPWHSMKDGLSDNGTAFEKAMGMTIWEYLEGHPDQSQLFNEGMAGETRLLTSSLISGSRDMFQGIDSLVDVGGGNGTTVKAISDAFPHIKCTLFDLPHVIANSYDLPNIERIGGDMFKSVPSAQAIILKLILHDWNDEDSIKILKQCRNAVPKDGGKVIIVDVALDEESDHELSSTRLILDIDMLVNTGGKERTKEVWEKIVKSAGFSGCKIRHIAAIQSVIEVFP</sequence>
<dbReference type="EC" id="2.1.1.116"/>
<dbReference type="EMBL" id="D29812">
    <property type="protein sequence ID" value="BAB08005.1"/>
    <property type="molecule type" value="mRNA"/>
</dbReference>
<dbReference type="SMR" id="Q9LEL5"/>
<dbReference type="KEGG" id="ag:BAB08005"/>
<dbReference type="BioCyc" id="MetaCyc:MONOMER-8441"/>
<dbReference type="BRENDA" id="2.1.1.116">
    <property type="organism ID" value="1610"/>
</dbReference>
<dbReference type="UniPathway" id="UPA00306">
    <property type="reaction ID" value="UER00444"/>
</dbReference>
<dbReference type="GO" id="GO:0030784">
    <property type="term" value="F:3'-hydroxy-N-methyl-(S)-coclaurine 4'-O-methyltransferase activity"/>
    <property type="evidence" value="ECO:0007669"/>
    <property type="project" value="UniProtKB-EC"/>
</dbReference>
<dbReference type="GO" id="GO:0008171">
    <property type="term" value="F:O-methyltransferase activity"/>
    <property type="evidence" value="ECO:0007669"/>
    <property type="project" value="InterPro"/>
</dbReference>
<dbReference type="GO" id="GO:0046983">
    <property type="term" value="F:protein dimerization activity"/>
    <property type="evidence" value="ECO:0007669"/>
    <property type="project" value="InterPro"/>
</dbReference>
<dbReference type="GO" id="GO:0032259">
    <property type="term" value="P:methylation"/>
    <property type="evidence" value="ECO:0007669"/>
    <property type="project" value="UniProtKB-KW"/>
</dbReference>
<dbReference type="FunFam" id="3.40.50.150:FF:000057">
    <property type="entry name" value="O-methyltransferase ZRP4"/>
    <property type="match status" value="1"/>
</dbReference>
<dbReference type="Gene3D" id="3.40.50.150">
    <property type="entry name" value="Vaccinia Virus protein VP39"/>
    <property type="match status" value="1"/>
</dbReference>
<dbReference type="Gene3D" id="1.10.10.10">
    <property type="entry name" value="Winged helix-like DNA-binding domain superfamily/Winged helix DNA-binding domain"/>
    <property type="match status" value="1"/>
</dbReference>
<dbReference type="InterPro" id="IPR016461">
    <property type="entry name" value="COMT-like"/>
</dbReference>
<dbReference type="InterPro" id="IPR001077">
    <property type="entry name" value="O_MeTrfase_dom"/>
</dbReference>
<dbReference type="InterPro" id="IPR012967">
    <property type="entry name" value="Plant_O-MeTrfase_dimerisation"/>
</dbReference>
<dbReference type="InterPro" id="IPR029063">
    <property type="entry name" value="SAM-dependent_MTases_sf"/>
</dbReference>
<dbReference type="InterPro" id="IPR036388">
    <property type="entry name" value="WH-like_DNA-bd_sf"/>
</dbReference>
<dbReference type="InterPro" id="IPR036390">
    <property type="entry name" value="WH_DNA-bd_sf"/>
</dbReference>
<dbReference type="PANTHER" id="PTHR11746">
    <property type="entry name" value="O-METHYLTRANSFERASE"/>
    <property type="match status" value="1"/>
</dbReference>
<dbReference type="Pfam" id="PF08100">
    <property type="entry name" value="Dimerisation"/>
    <property type="match status" value="1"/>
</dbReference>
<dbReference type="Pfam" id="PF00891">
    <property type="entry name" value="Methyltransf_2"/>
    <property type="match status" value="1"/>
</dbReference>
<dbReference type="PIRSF" id="PIRSF005739">
    <property type="entry name" value="O-mtase"/>
    <property type="match status" value="1"/>
</dbReference>
<dbReference type="SUPFAM" id="SSF53335">
    <property type="entry name" value="S-adenosyl-L-methionine-dependent methyltransferases"/>
    <property type="match status" value="1"/>
</dbReference>
<dbReference type="SUPFAM" id="SSF46785">
    <property type="entry name" value="Winged helix' DNA-binding domain"/>
    <property type="match status" value="1"/>
</dbReference>
<dbReference type="PROSITE" id="PS51683">
    <property type="entry name" value="SAM_OMT_II"/>
    <property type="match status" value="1"/>
</dbReference>
<organism>
    <name type="scientific">Coptis japonica</name>
    <name type="common">Japanese goldthread</name>
    <dbReference type="NCBI Taxonomy" id="3442"/>
    <lineage>
        <taxon>Eukaryota</taxon>
        <taxon>Viridiplantae</taxon>
        <taxon>Streptophyta</taxon>
        <taxon>Embryophyta</taxon>
        <taxon>Tracheophyta</taxon>
        <taxon>Spermatophyta</taxon>
        <taxon>Magnoliopsida</taxon>
        <taxon>Ranunculales</taxon>
        <taxon>Ranunculaceae</taxon>
        <taxon>Coptidoideae</taxon>
        <taxon>Coptis</taxon>
    </lineage>
</organism>
<keyword id="KW-0489">Methyltransferase</keyword>
<keyword id="KW-0949">S-adenosyl-L-methionine</keyword>
<keyword id="KW-0808">Transferase</keyword>